<evidence type="ECO:0000250" key="1">
    <source>
        <dbReference type="UniProtKB" id="P31677"/>
    </source>
</evidence>
<keyword id="KW-0328">Glycosyltransferase</keyword>
<keyword id="KW-0808">Transferase</keyword>
<organism>
    <name type="scientific">Escherichia coli (strain SMS-3-5 / SECEC)</name>
    <dbReference type="NCBI Taxonomy" id="439855"/>
    <lineage>
        <taxon>Bacteria</taxon>
        <taxon>Pseudomonadati</taxon>
        <taxon>Pseudomonadota</taxon>
        <taxon>Gammaproteobacteria</taxon>
        <taxon>Enterobacterales</taxon>
        <taxon>Enterobacteriaceae</taxon>
        <taxon>Escherichia</taxon>
    </lineage>
</organism>
<accession>B1LQW0</accession>
<name>OTSA_ECOSM</name>
<sequence>MSRLVVVSNRIAPPDEHAASAGGLAVGILGALKAAGGLWFGWSGETGNEDQPLKKVKKGNITWASFNLSEQDLDEYYNQFSNAVLWPAFHYRLDLVQFQRPAWDGYLRVNALLADKLLPLLQDDDIIWIHDYHLLPFAHELRKRGVNNRIGFFLHIPFPTPEIFNALPTYDTLLEQLCDYDLLGFQTENDRLAFLDCLSNLTRVTTRSAKSHTAWGKAFRTEVYPIGIEPKEIAKQAAGPLPPKLAQLKAELKNVQNIFSVERLDYSKGLPERFLAYEALLEKYPQHHGKIRYTQIAPTSRGDVQAYQDIRHQLENEAGRINGKYGQLGWTPLYYLNQHFDRKLLMKIFRYSDVGLVTPLRDGMNLVAKEYVAAQDPANPGVLVLSQFAGAANELTSALIVNPYDRDEVAAALDRALTMSLAERISRHAEMLDVIVKNDINHWQECFISDLKQIVPRSAESQQRDKVATFPKLA</sequence>
<protein>
    <recommendedName>
        <fullName evidence="1">Trehalose-6-phosphate synthase</fullName>
        <shortName evidence="1">TPS</shortName>
        <ecNumber evidence="1">2.4.1.15</ecNumber>
    </recommendedName>
    <alternativeName>
        <fullName evidence="1">Alpha,alpha-trehalose-phosphate synthase [UDP-forming]</fullName>
    </alternativeName>
    <alternativeName>
        <fullName evidence="1">Osmoregulatory trehalose synthesis protein A</fullName>
        <shortName evidence="1">OtsA</shortName>
    </alternativeName>
    <alternativeName>
        <fullName evidence="1">UDP-glucose-glucosephosphate glucosyltransferase</fullName>
    </alternativeName>
</protein>
<reference key="1">
    <citation type="journal article" date="2008" name="J. Bacteriol.">
        <title>Insights into the environmental resistance gene pool from the genome sequence of the multidrug-resistant environmental isolate Escherichia coli SMS-3-5.</title>
        <authorList>
            <person name="Fricke W.F."/>
            <person name="Wright M.S."/>
            <person name="Lindell A.H."/>
            <person name="Harkins D.M."/>
            <person name="Baker-Austin C."/>
            <person name="Ravel J."/>
            <person name="Stepanauskas R."/>
        </authorList>
    </citation>
    <scope>NUCLEOTIDE SEQUENCE [LARGE SCALE GENOMIC DNA]</scope>
    <source>
        <strain>SMS-3-5 / SECEC</strain>
    </source>
</reference>
<comment type="function">
    <text evidence="1">Probably involved in the osmoprotection via the biosynthesis of trehalose. Catalyzes the transfer of glucose from UDP-alpha-D-glucose (UDP-Glc) to D-glucose 6-phosphate (Glc-6-P) to form trehalose-6-phosphate. Acts with retention of the anomeric configuration of the UDP-sugar donor.</text>
</comment>
<comment type="catalytic activity">
    <reaction evidence="1">
        <text>D-glucose 6-phosphate + UDP-alpha-D-glucose = alpha,alpha-trehalose 6-phosphate + UDP + H(+)</text>
        <dbReference type="Rhea" id="RHEA:18889"/>
        <dbReference type="ChEBI" id="CHEBI:15378"/>
        <dbReference type="ChEBI" id="CHEBI:58223"/>
        <dbReference type="ChEBI" id="CHEBI:58429"/>
        <dbReference type="ChEBI" id="CHEBI:58885"/>
        <dbReference type="ChEBI" id="CHEBI:61548"/>
        <dbReference type="EC" id="2.4.1.15"/>
    </reaction>
</comment>
<comment type="pathway">
    <text evidence="1">Glycan biosynthesis; trehalose biosynthesis.</text>
</comment>
<comment type="subunit">
    <text evidence="1">Homotetramer.</text>
</comment>
<comment type="similarity">
    <text evidence="1">Belongs to the glycosyltransferase 20 family.</text>
</comment>
<feature type="chain" id="PRO_0000348895" description="Trehalose-6-phosphate synthase">
    <location>
        <begin position="1"/>
        <end position="474"/>
    </location>
</feature>
<feature type="binding site" evidence="1">
    <location>
        <position position="10"/>
    </location>
    <ligand>
        <name>D-glucose 6-phosphate</name>
        <dbReference type="ChEBI" id="CHEBI:61548"/>
    </ligand>
</feature>
<feature type="binding site" evidence="1">
    <location>
        <begin position="22"/>
        <end position="23"/>
    </location>
    <ligand>
        <name>UDP-alpha-D-glucose</name>
        <dbReference type="ChEBI" id="CHEBI:58885"/>
    </ligand>
</feature>
<feature type="binding site" evidence="1">
    <location>
        <position position="77"/>
    </location>
    <ligand>
        <name>D-glucose 6-phosphate</name>
        <dbReference type="ChEBI" id="CHEBI:61548"/>
    </ligand>
</feature>
<feature type="binding site" evidence="1">
    <location>
        <position position="131"/>
    </location>
    <ligand>
        <name>D-glucose 6-phosphate</name>
        <dbReference type="ChEBI" id="CHEBI:61548"/>
    </ligand>
</feature>
<feature type="binding site" evidence="1">
    <location>
        <position position="263"/>
    </location>
    <ligand>
        <name>UDP-alpha-D-glucose</name>
        <dbReference type="ChEBI" id="CHEBI:58885"/>
    </ligand>
</feature>
<feature type="binding site" evidence="1">
    <location>
        <position position="268"/>
    </location>
    <ligand>
        <name>UDP-alpha-D-glucose</name>
        <dbReference type="ChEBI" id="CHEBI:58885"/>
    </ligand>
</feature>
<feature type="binding site" evidence="1">
    <location>
        <position position="301"/>
    </location>
    <ligand>
        <name>D-glucose 6-phosphate</name>
        <dbReference type="ChEBI" id="CHEBI:61548"/>
    </ligand>
</feature>
<feature type="binding site" evidence="1">
    <location>
        <position position="340"/>
    </location>
    <ligand>
        <name>UDP-alpha-D-glucose</name>
        <dbReference type="ChEBI" id="CHEBI:58885"/>
    </ligand>
</feature>
<feature type="binding site" evidence="1">
    <location>
        <begin position="366"/>
        <end position="370"/>
    </location>
    <ligand>
        <name>UDP-alpha-D-glucose</name>
        <dbReference type="ChEBI" id="CHEBI:58885"/>
    </ligand>
</feature>
<feature type="site" description="Involved in alpha anomer selectivity" evidence="1">
    <location>
        <position position="86"/>
    </location>
</feature>
<feature type="site" description="Involved in alpha anomer selectivity" evidence="1">
    <location>
        <position position="156"/>
    </location>
</feature>
<dbReference type="EC" id="2.4.1.15" evidence="1"/>
<dbReference type="EMBL" id="CP000970">
    <property type="protein sequence ID" value="ACB19644.1"/>
    <property type="molecule type" value="Genomic_DNA"/>
</dbReference>
<dbReference type="RefSeq" id="WP_001295646.1">
    <property type="nucleotide sequence ID" value="NC_010498.1"/>
</dbReference>
<dbReference type="SMR" id="B1LQW0"/>
<dbReference type="CAZy" id="GT20">
    <property type="family name" value="Glycosyltransferase Family 20"/>
</dbReference>
<dbReference type="GeneID" id="93776199"/>
<dbReference type="KEGG" id="ecm:EcSMS35_1289"/>
<dbReference type="HOGENOM" id="CLU_002351_7_1_6"/>
<dbReference type="UniPathway" id="UPA00299"/>
<dbReference type="Proteomes" id="UP000007011">
    <property type="component" value="Chromosome"/>
</dbReference>
<dbReference type="GO" id="GO:0003825">
    <property type="term" value="F:alpha,alpha-trehalose-phosphate synthase (UDP-forming) activity"/>
    <property type="evidence" value="ECO:0007669"/>
    <property type="project" value="UniProtKB-EC"/>
</dbReference>
<dbReference type="GO" id="GO:0005992">
    <property type="term" value="P:trehalose biosynthetic process"/>
    <property type="evidence" value="ECO:0007669"/>
    <property type="project" value="UniProtKB-UniPathway"/>
</dbReference>
<dbReference type="CDD" id="cd03788">
    <property type="entry name" value="GT20_TPS"/>
    <property type="match status" value="1"/>
</dbReference>
<dbReference type="FunFam" id="3.40.50.2000:FF:000024">
    <property type="entry name" value="Trehalose-6-phosphate synthase"/>
    <property type="match status" value="1"/>
</dbReference>
<dbReference type="Gene3D" id="3.40.50.2000">
    <property type="entry name" value="Glycogen Phosphorylase B"/>
    <property type="match status" value="2"/>
</dbReference>
<dbReference type="InterPro" id="IPR001830">
    <property type="entry name" value="Glyco_trans_20"/>
</dbReference>
<dbReference type="InterPro" id="IPR012766">
    <property type="entry name" value="Trehalose_OtsA"/>
</dbReference>
<dbReference type="NCBIfam" id="NF007513">
    <property type="entry name" value="PRK10117.1"/>
    <property type="match status" value="1"/>
</dbReference>
<dbReference type="NCBIfam" id="TIGR02400">
    <property type="entry name" value="trehalose_OtsA"/>
    <property type="match status" value="1"/>
</dbReference>
<dbReference type="PANTHER" id="PTHR10788:SF106">
    <property type="entry name" value="BCDNA.GH08860"/>
    <property type="match status" value="1"/>
</dbReference>
<dbReference type="PANTHER" id="PTHR10788">
    <property type="entry name" value="TREHALOSE-6-PHOSPHATE SYNTHASE"/>
    <property type="match status" value="1"/>
</dbReference>
<dbReference type="Pfam" id="PF00982">
    <property type="entry name" value="Glyco_transf_20"/>
    <property type="match status" value="1"/>
</dbReference>
<dbReference type="SUPFAM" id="SSF53756">
    <property type="entry name" value="UDP-Glycosyltransferase/glycogen phosphorylase"/>
    <property type="match status" value="1"/>
</dbReference>
<gene>
    <name evidence="1" type="primary">otsA</name>
    <name type="ordered locus">EcSMS35_1289</name>
</gene>
<proteinExistence type="inferred from homology"/>